<dbReference type="EC" id="1.3.7.12" evidence="1"/>
<dbReference type="EMBL" id="JN604886">
    <property type="protein sequence ID" value="AEW31179.1"/>
    <property type="molecule type" value="mRNA"/>
</dbReference>
<dbReference type="EMBL" id="AC078839">
    <property type="protein sequence ID" value="AAK13108.1"/>
    <property type="status" value="ALT_SEQ"/>
    <property type="molecule type" value="Genomic_DNA"/>
</dbReference>
<dbReference type="EMBL" id="AC079936">
    <property type="protein sequence ID" value="AAK52126.1"/>
    <property type="status" value="ALT_SEQ"/>
    <property type="molecule type" value="Genomic_DNA"/>
</dbReference>
<dbReference type="EMBL" id="DP000086">
    <property type="protein sequence ID" value="ABB47486.1"/>
    <property type="molecule type" value="Genomic_DNA"/>
</dbReference>
<dbReference type="EMBL" id="AP008216">
    <property type="protein sequence ID" value="BAF26414.1"/>
    <property type="status" value="ALT_INIT"/>
    <property type="molecule type" value="Genomic_DNA"/>
</dbReference>
<dbReference type="EMBL" id="AP014966">
    <property type="protein sequence ID" value="BAT10653.1"/>
    <property type="molecule type" value="Genomic_DNA"/>
</dbReference>
<dbReference type="RefSeq" id="XP_015614206.1">
    <property type="nucleotide sequence ID" value="XM_015758720.1"/>
</dbReference>
<dbReference type="SMR" id="Q338P6"/>
<dbReference type="FunCoup" id="Q338P6">
    <property type="interactions" value="1956"/>
</dbReference>
<dbReference type="STRING" id="39947.Q338P6"/>
<dbReference type="PaxDb" id="39947-Q338P6"/>
<dbReference type="EnsemblPlants" id="Os10t0389200-01">
    <property type="protein sequence ID" value="Os10t0389200-01"/>
    <property type="gene ID" value="Os10g0389200"/>
</dbReference>
<dbReference type="Gramene" id="Os10t0389200-01">
    <property type="protein sequence ID" value="Os10t0389200-01"/>
    <property type="gene ID" value="Os10g0389200"/>
</dbReference>
<dbReference type="KEGG" id="dosa:Os10g0389200"/>
<dbReference type="eggNOG" id="ENOG502QSTY">
    <property type="taxonomic scope" value="Eukaryota"/>
</dbReference>
<dbReference type="HOGENOM" id="CLU_073200_0_0_1"/>
<dbReference type="InParanoid" id="Q338P6"/>
<dbReference type="OMA" id="WVEFPHL"/>
<dbReference type="OrthoDB" id="26525at2759"/>
<dbReference type="UniPathway" id="UPA00674"/>
<dbReference type="Proteomes" id="UP000000763">
    <property type="component" value="Chromosome 10"/>
</dbReference>
<dbReference type="Proteomes" id="UP000059680">
    <property type="component" value="Chromosome 10"/>
</dbReference>
<dbReference type="GO" id="GO:0009507">
    <property type="term" value="C:chloroplast"/>
    <property type="evidence" value="ECO:0000318"/>
    <property type="project" value="GO_Central"/>
</dbReference>
<dbReference type="GO" id="GO:0051743">
    <property type="term" value="F:red chlorophyll catabolite reductase activity"/>
    <property type="evidence" value="ECO:0000318"/>
    <property type="project" value="GO_Central"/>
</dbReference>
<dbReference type="GO" id="GO:0015996">
    <property type="term" value="P:chlorophyll catabolic process"/>
    <property type="evidence" value="ECO:0000318"/>
    <property type="project" value="GO_Central"/>
</dbReference>
<dbReference type="FunFam" id="3.40.1500.20:FF:000001">
    <property type="entry name" value="Red chlorophyll catabolite reductase, chloroplastic"/>
    <property type="match status" value="1"/>
</dbReference>
<dbReference type="Gene3D" id="3.40.1500.20">
    <property type="match status" value="1"/>
</dbReference>
<dbReference type="InterPro" id="IPR009439">
    <property type="entry name" value="RCC_reductase"/>
</dbReference>
<dbReference type="PANTHER" id="PTHR34685">
    <property type="entry name" value="RED CHLOROPHYLL CATABOLITE REDUCTASE, CHLOROPLASTIC"/>
    <property type="match status" value="1"/>
</dbReference>
<dbReference type="PANTHER" id="PTHR34685:SF2">
    <property type="entry name" value="RED CHLOROPHYLL CATABOLITE REDUCTASE, CHLOROPLASTIC"/>
    <property type="match status" value="1"/>
</dbReference>
<dbReference type="Pfam" id="PF06405">
    <property type="entry name" value="RCC_reductase"/>
    <property type="match status" value="1"/>
</dbReference>
<comment type="function">
    <text evidence="1 4">Catalyzes the key reaction of chlorophyll catabolism, porphyrin macrocycle cleavage of pheophorbide a (pheide a) to a primary fluorescent catabolite (pFCC). Works in a two-step reaction with pheophorbide a oxygenase (PaO) by reducing the C20/C1 double bond of the intermediate, RCC. Belongs to the chlorophyll catabolic enzymes (CCEs) (By similarity). May play a role in senescence and response to wounding (PubMed:21807436).</text>
</comment>
<comment type="catalytic activity">
    <reaction evidence="1">
        <text>primary fluorescent chlorophyll catabolite + 2 oxidized [2Fe-2S]-[ferredoxin] = red chlorophyll catabolite + 2 reduced [2Fe-2S]-[ferredoxin] + 3 H(+)</text>
        <dbReference type="Rhea" id="RHEA:24752"/>
        <dbReference type="Rhea" id="RHEA-COMP:10000"/>
        <dbReference type="Rhea" id="RHEA-COMP:10001"/>
        <dbReference type="ChEBI" id="CHEBI:15378"/>
        <dbReference type="ChEBI" id="CHEBI:33737"/>
        <dbReference type="ChEBI" id="CHEBI:33738"/>
        <dbReference type="ChEBI" id="CHEBI:58716"/>
        <dbReference type="ChEBI" id="CHEBI:77670"/>
        <dbReference type="EC" id="1.3.7.12"/>
    </reaction>
    <physiologicalReaction direction="right-to-left" evidence="6">
        <dbReference type="Rhea" id="RHEA:24754"/>
    </physiologicalReaction>
</comment>
<comment type="pathway">
    <text evidence="6">Porphyrin-containing compound metabolism; chlorophyll degradation.</text>
</comment>
<comment type="subcellular location">
    <subcellularLocation>
        <location evidence="2">Plastid</location>
        <location evidence="2">Chloroplast</location>
    </subcellularLocation>
</comment>
<comment type="tissue specificity">
    <text evidence="4">Expressed in leaves (PubMed:21807436). Expressed at low levels in roots, stems, panicles and seeds (PubMed:21807436).</text>
</comment>
<comment type="induction">
    <text evidence="4">Induced by wounding and senescence in leaves.</text>
</comment>
<comment type="miscellaneous">
    <text evidence="4">Plants silencing RCCR1 exhibit lesion-mimic spots on leaves.</text>
</comment>
<comment type="sequence caution" evidence="6">
    <conflict type="erroneous gene model prediction">
        <sequence resource="EMBL-CDS" id="AAK13108"/>
    </conflict>
</comment>
<comment type="sequence caution" evidence="6">
    <conflict type="erroneous gene model prediction">
        <sequence resource="EMBL-CDS" id="AAK52126"/>
    </conflict>
</comment>
<comment type="sequence caution" evidence="6">
    <conflict type="erroneous initiation">
        <sequence resource="EMBL-CDS" id="BAF26414"/>
    </conflict>
    <text>Truncated N-terminus.</text>
</comment>
<protein>
    <recommendedName>
        <fullName evidence="5">Red chlorophyll catabolite reductase 1, chloroplastic</fullName>
        <shortName evidence="5">OsRCCR1</shortName>
        <shortName evidence="6">RCC reductase</shortName>
        <ecNumber evidence="1">1.3.7.12</ecNumber>
    </recommendedName>
</protein>
<reference key="1">
    <citation type="journal article" date="2003" name="Science">
        <title>In-depth view of structure, activity, and evolution of rice chromosome 10.</title>
        <authorList>
            <person name="Yu Y."/>
            <person name="Rambo T."/>
            <person name="Currie J."/>
            <person name="Saski C."/>
            <person name="Kim H.-R."/>
            <person name="Collura K."/>
            <person name="Thompson S."/>
            <person name="Simmons J."/>
            <person name="Yang T.-J."/>
            <person name="Nah G."/>
            <person name="Patel A.J."/>
            <person name="Thurmond S."/>
            <person name="Henry D."/>
            <person name="Oates R."/>
            <person name="Palmer M."/>
            <person name="Pries G."/>
            <person name="Gibson J."/>
            <person name="Anderson H."/>
            <person name="Paradkar M."/>
            <person name="Crane L."/>
            <person name="Dale J."/>
            <person name="Carver M.B."/>
            <person name="Wood T."/>
            <person name="Frisch D."/>
            <person name="Engler F."/>
            <person name="Soderlund C."/>
            <person name="Palmer L.E."/>
            <person name="Teytelman L."/>
            <person name="Nascimento L."/>
            <person name="De la Bastide M."/>
            <person name="Spiegel L."/>
            <person name="Ware D."/>
            <person name="O'Shaughnessy A."/>
            <person name="Dike S."/>
            <person name="Dedhia N."/>
            <person name="Preston R."/>
            <person name="Huang E."/>
            <person name="Ferraro K."/>
            <person name="Kuit K."/>
            <person name="Miller B."/>
            <person name="Zutavern T."/>
            <person name="Katzenberger F."/>
            <person name="Muller S."/>
            <person name="Balija V."/>
            <person name="Martienssen R.A."/>
            <person name="Stein L."/>
            <person name="Minx P."/>
            <person name="Johnson D."/>
            <person name="Cordum H."/>
            <person name="Mardis E."/>
            <person name="Cheng Z."/>
            <person name="Jiang J."/>
            <person name="Wilson R."/>
            <person name="McCombie W.R."/>
            <person name="Wing R.A."/>
            <person name="Yuan Q."/>
            <person name="Ouyang S."/>
            <person name="Liu J."/>
            <person name="Jones K.M."/>
            <person name="Gansberger K."/>
            <person name="Moffat K."/>
            <person name="Hill J."/>
            <person name="Tsitrin T."/>
            <person name="Overton L."/>
            <person name="Bera J."/>
            <person name="Kim M."/>
            <person name="Jin S."/>
            <person name="Tallon L."/>
            <person name="Ciecko A."/>
            <person name="Pai G."/>
            <person name="Van Aken S."/>
            <person name="Utterback T."/>
            <person name="Reidmuller S."/>
            <person name="Bormann J."/>
            <person name="Feldblyum T."/>
            <person name="Hsiao J."/>
            <person name="Zismann V."/>
            <person name="Blunt S."/>
            <person name="de Vazeille A.R."/>
            <person name="Shaffer T."/>
            <person name="Koo H."/>
            <person name="Suh B."/>
            <person name="Yang Q."/>
            <person name="Haas B."/>
            <person name="Peterson J."/>
            <person name="Pertea M."/>
            <person name="Volfovsky N."/>
            <person name="Wortman J."/>
            <person name="White O."/>
            <person name="Salzberg S.L."/>
            <person name="Fraser C.M."/>
            <person name="Buell C.R."/>
            <person name="Messing J."/>
            <person name="Song R."/>
            <person name="Fuks G."/>
            <person name="Llaca V."/>
            <person name="Kovchak S."/>
            <person name="Young S."/>
            <person name="Bowers J.E."/>
            <person name="Paterson A.H."/>
            <person name="Johns M.A."/>
            <person name="Mao L."/>
            <person name="Pan H."/>
            <person name="Dean R.A."/>
        </authorList>
    </citation>
    <scope>NUCLEOTIDE SEQUENCE [LARGE SCALE GENOMIC DNA]</scope>
    <source>
        <strain>cv. Nipponbare</strain>
    </source>
</reference>
<reference key="2">
    <citation type="journal article" date="2005" name="Nature">
        <title>The map-based sequence of the rice genome.</title>
        <authorList>
            <consortium name="International rice genome sequencing project (IRGSP)"/>
        </authorList>
    </citation>
    <scope>NUCLEOTIDE SEQUENCE [LARGE SCALE GENOMIC DNA]</scope>
    <source>
        <strain>cv. Nipponbare</strain>
    </source>
</reference>
<reference key="3">
    <citation type="journal article" date="2008" name="Nucleic Acids Res.">
        <title>The rice annotation project database (RAP-DB): 2008 update.</title>
        <authorList>
            <consortium name="The rice annotation project (RAP)"/>
        </authorList>
    </citation>
    <scope>GENOME REANNOTATION</scope>
    <source>
        <strain>cv. Nipponbare</strain>
    </source>
</reference>
<reference key="4">
    <citation type="journal article" date="2013" name="Rice">
        <title>Improvement of the Oryza sativa Nipponbare reference genome using next generation sequence and optical map data.</title>
        <authorList>
            <person name="Kawahara Y."/>
            <person name="de la Bastide M."/>
            <person name="Hamilton J.P."/>
            <person name="Kanamori H."/>
            <person name="McCombie W.R."/>
            <person name="Ouyang S."/>
            <person name="Schwartz D.C."/>
            <person name="Tanaka T."/>
            <person name="Wu J."/>
            <person name="Zhou S."/>
            <person name="Childs K.L."/>
            <person name="Davidson R.M."/>
            <person name="Lin H."/>
            <person name="Quesada-Ocampo L."/>
            <person name="Vaillancourt B."/>
            <person name="Sakai H."/>
            <person name="Lee S.S."/>
            <person name="Kim J."/>
            <person name="Numa H."/>
            <person name="Itoh T."/>
            <person name="Buell C.R."/>
            <person name="Matsumoto T."/>
        </authorList>
    </citation>
    <scope>GENOME REANNOTATION</scope>
    <source>
        <strain>cv. Nipponbare</strain>
    </source>
</reference>
<reference key="5">
    <citation type="journal article" date="2011" name="J. Plant Physiol.">
        <title>Knockdown of OsPAO and OsRCCR1 cause different plant death phenotypes in rice.</title>
        <authorList>
            <person name="Tang Y."/>
            <person name="Li M."/>
            <person name="Chen Y."/>
            <person name="Wu P."/>
            <person name="Wu G."/>
            <person name="Jiang H."/>
        </authorList>
    </citation>
    <scope>FUNCTION</scope>
    <scope>TISSUE SPECIFICITY</scope>
    <scope>INDUCTION</scope>
</reference>
<feature type="transit peptide" description="Chloroplast" evidence="2">
    <location>
        <begin position="1"/>
        <end position="50"/>
    </location>
</feature>
<feature type="chain" id="PRO_0000449544" description="Red chlorophyll catabolite reductase 1, chloroplastic">
    <location>
        <begin position="51"/>
        <end position="329"/>
    </location>
</feature>
<feature type="region of interest" description="Disordered" evidence="3">
    <location>
        <begin position="1"/>
        <end position="61"/>
    </location>
</feature>
<feature type="compositionally biased region" description="Pro residues" evidence="3">
    <location>
        <begin position="1"/>
        <end position="11"/>
    </location>
</feature>
<feature type="compositionally biased region" description="Low complexity" evidence="3">
    <location>
        <begin position="12"/>
        <end position="28"/>
    </location>
</feature>
<feature type="compositionally biased region" description="Low complexity" evidence="3">
    <location>
        <begin position="46"/>
        <end position="59"/>
    </location>
</feature>
<feature type="binding site" evidence="1">
    <location>
        <position position="163"/>
    </location>
    <ligand>
        <name>red chlorophyll catabolite</name>
        <dbReference type="ChEBI" id="CHEBI:58716"/>
    </ligand>
</feature>
<feature type="binding site" evidence="1">
    <location>
        <begin position="216"/>
        <end position="218"/>
    </location>
    <ligand>
        <name>red chlorophyll catabolite</name>
        <dbReference type="ChEBI" id="CHEBI:58716"/>
    </ligand>
</feature>
<feature type="binding site" evidence="1">
    <location>
        <position position="299"/>
    </location>
    <ligand>
        <name>red chlorophyll catabolite</name>
        <dbReference type="ChEBI" id="CHEBI:58716"/>
    </ligand>
</feature>
<evidence type="ECO:0000250" key="1">
    <source>
        <dbReference type="UniProtKB" id="Q8LDU4"/>
    </source>
</evidence>
<evidence type="ECO:0000255" key="2"/>
<evidence type="ECO:0000256" key="3">
    <source>
        <dbReference type="SAM" id="MobiDB-lite"/>
    </source>
</evidence>
<evidence type="ECO:0000269" key="4">
    <source>
    </source>
</evidence>
<evidence type="ECO:0000303" key="5">
    <source>
    </source>
</evidence>
<evidence type="ECO:0000305" key="6"/>
<evidence type="ECO:0000312" key="7">
    <source>
        <dbReference type="EMBL" id="AAK13108.1"/>
    </source>
</evidence>
<evidence type="ECO:0000312" key="8">
    <source>
        <dbReference type="EMBL" id="AAK52126.1"/>
    </source>
</evidence>
<evidence type="ECO:0000312" key="9">
    <source>
        <dbReference type="EMBL" id="ABB47486.1"/>
    </source>
</evidence>
<evidence type="ECO:0000312" key="10">
    <source>
        <dbReference type="EMBL" id="BAT10653.1"/>
    </source>
</evidence>
<keyword id="KW-0881">Chlorophyll catabolism</keyword>
<keyword id="KW-0150">Chloroplast</keyword>
<keyword id="KW-0560">Oxidoreductase</keyword>
<keyword id="KW-0934">Plastid</keyword>
<keyword id="KW-1185">Reference proteome</keyword>
<keyword id="KW-0809">Transit peptide</keyword>
<sequence length="329" mass="35551">MLQLRSPPPATSSPSSAVSFPTLAPRLLPLRRRRRGAGSQLGGKTSSAVRASSAAAPGATEPEVMVEVAHREVARALASLAEARLGARLLPSAVPPDVAEFRSGGGAGNAVGSLDVRRGAPGSTIDFMLQSSLHCKVPNGAIDITSLLIFLNASTDAPHFLMEFIQGSPTSIVVLLDLLPRKDLALHPEYIERYYENTQVDKQREKVEELPQARPYRSRSLFVRSTFSLTAILMSIDCGQGGEGTLEEIVRGQLATAARALLQIWLDSCADHTSEMEEGERENMIKRDQIVRSKSIEVDLTSNLPRMFGPDVADRVIAEIQKAFGVQEA</sequence>
<organism>
    <name type="scientific">Oryza sativa subsp. japonica</name>
    <name type="common">Rice</name>
    <dbReference type="NCBI Taxonomy" id="39947"/>
    <lineage>
        <taxon>Eukaryota</taxon>
        <taxon>Viridiplantae</taxon>
        <taxon>Streptophyta</taxon>
        <taxon>Embryophyta</taxon>
        <taxon>Tracheophyta</taxon>
        <taxon>Spermatophyta</taxon>
        <taxon>Magnoliopsida</taxon>
        <taxon>Liliopsida</taxon>
        <taxon>Poales</taxon>
        <taxon>Poaceae</taxon>
        <taxon>BOP clade</taxon>
        <taxon>Oryzoideae</taxon>
        <taxon>Oryzeae</taxon>
        <taxon>Oryzinae</taxon>
        <taxon>Oryza</taxon>
        <taxon>Oryza sativa</taxon>
    </lineage>
</organism>
<gene>
    <name evidence="5" type="primary">RCCR1</name>
    <name evidence="10" type="ordered locus">Os10g0389200</name>
    <name evidence="9" type="ordered locus">LOC_Os10g25030</name>
    <name evidence="7" type="ORF">OSJNBa0094J09.24</name>
    <name evidence="8" type="ORF">OSJNBb0061I18.22</name>
</gene>
<proteinExistence type="evidence at transcript level"/>
<name>RCCR1_ORYSJ</name>
<accession>Q338P6</accession>
<accession>Q0IXZ5</accession>
<accession>Q94HB3</accession>
<accession>Q9AYE6</accession>